<evidence type="ECO:0000255" key="1">
    <source>
        <dbReference type="HAMAP-Rule" id="MF_00375"/>
    </source>
</evidence>
<keyword id="KW-0963">Cytoplasm</keyword>
<keyword id="KW-0413">Isomerase</keyword>
<keyword id="KW-0627">Porphyrin biosynthesis</keyword>
<keyword id="KW-0663">Pyridoxal phosphate</keyword>
<feature type="chain" id="PRO_0000300943" description="Glutamate-1-semialdehyde 2,1-aminomutase">
    <location>
        <begin position="1"/>
        <end position="428"/>
    </location>
</feature>
<feature type="modified residue" description="N6-(pyridoxal phosphate)lysine" evidence="1">
    <location>
        <position position="265"/>
    </location>
</feature>
<accession>A1AVQ1</accession>
<gene>
    <name evidence="1" type="primary">hemL</name>
    <name type="ordered locus">Rmag_0222</name>
</gene>
<proteinExistence type="inferred from homology"/>
<dbReference type="EC" id="5.4.3.8" evidence="1"/>
<dbReference type="EMBL" id="CP000488">
    <property type="protein sequence ID" value="ABL02008.1"/>
    <property type="molecule type" value="Genomic_DNA"/>
</dbReference>
<dbReference type="RefSeq" id="WP_011737633.1">
    <property type="nucleotide sequence ID" value="NC_008610.1"/>
</dbReference>
<dbReference type="SMR" id="A1AVQ1"/>
<dbReference type="STRING" id="413404.Rmag_0222"/>
<dbReference type="KEGG" id="rma:Rmag_0222"/>
<dbReference type="eggNOG" id="COG0001">
    <property type="taxonomic scope" value="Bacteria"/>
</dbReference>
<dbReference type="HOGENOM" id="CLU_016922_1_5_6"/>
<dbReference type="OrthoDB" id="9801052at2"/>
<dbReference type="UniPathway" id="UPA00251">
    <property type="reaction ID" value="UER00317"/>
</dbReference>
<dbReference type="Proteomes" id="UP000002587">
    <property type="component" value="Chromosome"/>
</dbReference>
<dbReference type="GO" id="GO:0005737">
    <property type="term" value="C:cytoplasm"/>
    <property type="evidence" value="ECO:0007669"/>
    <property type="project" value="UniProtKB-SubCell"/>
</dbReference>
<dbReference type="GO" id="GO:0042286">
    <property type="term" value="F:glutamate-1-semialdehyde 2,1-aminomutase activity"/>
    <property type="evidence" value="ECO:0007669"/>
    <property type="project" value="UniProtKB-UniRule"/>
</dbReference>
<dbReference type="GO" id="GO:0030170">
    <property type="term" value="F:pyridoxal phosphate binding"/>
    <property type="evidence" value="ECO:0007669"/>
    <property type="project" value="InterPro"/>
</dbReference>
<dbReference type="GO" id="GO:0008483">
    <property type="term" value="F:transaminase activity"/>
    <property type="evidence" value="ECO:0007669"/>
    <property type="project" value="InterPro"/>
</dbReference>
<dbReference type="GO" id="GO:0006782">
    <property type="term" value="P:protoporphyrinogen IX biosynthetic process"/>
    <property type="evidence" value="ECO:0007669"/>
    <property type="project" value="UniProtKB-UniRule"/>
</dbReference>
<dbReference type="CDD" id="cd00610">
    <property type="entry name" value="OAT_like"/>
    <property type="match status" value="1"/>
</dbReference>
<dbReference type="FunFam" id="3.40.640.10:FF:000021">
    <property type="entry name" value="Glutamate-1-semialdehyde 2,1-aminomutase"/>
    <property type="match status" value="1"/>
</dbReference>
<dbReference type="Gene3D" id="3.90.1150.10">
    <property type="entry name" value="Aspartate Aminotransferase, domain 1"/>
    <property type="match status" value="1"/>
</dbReference>
<dbReference type="Gene3D" id="3.40.640.10">
    <property type="entry name" value="Type I PLP-dependent aspartate aminotransferase-like (Major domain)"/>
    <property type="match status" value="1"/>
</dbReference>
<dbReference type="HAMAP" id="MF_00375">
    <property type="entry name" value="HemL_aminotrans_3"/>
    <property type="match status" value="1"/>
</dbReference>
<dbReference type="InterPro" id="IPR004639">
    <property type="entry name" value="4pyrrol_synth_GluAld_NH2Trfase"/>
</dbReference>
<dbReference type="InterPro" id="IPR005814">
    <property type="entry name" value="Aminotrans_3"/>
</dbReference>
<dbReference type="InterPro" id="IPR049704">
    <property type="entry name" value="Aminotrans_3_PPA_site"/>
</dbReference>
<dbReference type="InterPro" id="IPR015424">
    <property type="entry name" value="PyrdxlP-dep_Trfase"/>
</dbReference>
<dbReference type="InterPro" id="IPR015421">
    <property type="entry name" value="PyrdxlP-dep_Trfase_major"/>
</dbReference>
<dbReference type="InterPro" id="IPR015422">
    <property type="entry name" value="PyrdxlP-dep_Trfase_small"/>
</dbReference>
<dbReference type="NCBIfam" id="TIGR00713">
    <property type="entry name" value="hemL"/>
    <property type="match status" value="1"/>
</dbReference>
<dbReference type="NCBIfam" id="NF000818">
    <property type="entry name" value="PRK00062.1"/>
    <property type="match status" value="1"/>
</dbReference>
<dbReference type="PANTHER" id="PTHR43713">
    <property type="entry name" value="GLUTAMATE-1-SEMIALDEHYDE 2,1-AMINOMUTASE"/>
    <property type="match status" value="1"/>
</dbReference>
<dbReference type="PANTHER" id="PTHR43713:SF3">
    <property type="entry name" value="GLUTAMATE-1-SEMIALDEHYDE 2,1-AMINOMUTASE 1, CHLOROPLASTIC-RELATED"/>
    <property type="match status" value="1"/>
</dbReference>
<dbReference type="Pfam" id="PF00202">
    <property type="entry name" value="Aminotran_3"/>
    <property type="match status" value="1"/>
</dbReference>
<dbReference type="SUPFAM" id="SSF53383">
    <property type="entry name" value="PLP-dependent transferases"/>
    <property type="match status" value="1"/>
</dbReference>
<dbReference type="PROSITE" id="PS00600">
    <property type="entry name" value="AA_TRANSFER_CLASS_3"/>
    <property type="match status" value="1"/>
</dbReference>
<name>GSA_RUTMC</name>
<protein>
    <recommendedName>
        <fullName evidence="1">Glutamate-1-semialdehyde 2,1-aminomutase</fullName>
        <shortName evidence="1">GSA</shortName>
        <ecNumber evidence="1">5.4.3.8</ecNumber>
    </recommendedName>
    <alternativeName>
        <fullName evidence="1">Glutamate-1-semialdehyde aminotransferase</fullName>
        <shortName evidence="1">GSA-AT</shortName>
    </alternativeName>
</protein>
<organism>
    <name type="scientific">Ruthia magnifica subsp. Calyptogena magnifica</name>
    <dbReference type="NCBI Taxonomy" id="413404"/>
    <lineage>
        <taxon>Bacteria</taxon>
        <taxon>Pseudomonadati</taxon>
        <taxon>Pseudomonadota</taxon>
        <taxon>Gammaproteobacteria</taxon>
        <taxon>Candidatus Pseudothioglobaceae</taxon>
        <taxon>Candidatus Ruthturnera</taxon>
    </lineage>
</organism>
<reference key="1">
    <citation type="journal article" date="2007" name="Science">
        <title>The Calyptogena magnifica chemoautotrophic symbiont genome.</title>
        <authorList>
            <person name="Newton I.L.G."/>
            <person name="Woyke T."/>
            <person name="Auchtung T.A."/>
            <person name="Dilly G.F."/>
            <person name="Dutton R.J."/>
            <person name="Fisher M.C."/>
            <person name="Fontanez K.M."/>
            <person name="Lau E."/>
            <person name="Stewart F.J."/>
            <person name="Richardson P.M."/>
            <person name="Barry K.W."/>
            <person name="Saunders E."/>
            <person name="Detter J.C."/>
            <person name="Wu D."/>
            <person name="Eisen J.A."/>
            <person name="Cavanaugh C.M."/>
        </authorList>
    </citation>
    <scope>NUCLEOTIDE SEQUENCE [LARGE SCALE GENOMIC DNA]</scope>
</reference>
<sequence>MNQSETLFAQAKTVIPGGVNSPVRAFNGVGGSPIFFTRGEGAYLFDEDDKKYIDYVASWGSMILGHTNQAVIIAVKTTLENGLGFGAPTQIETKLAEKVCELMPSIELVRMVSSGTEATMSAIRLARGHTGRDKIIKFEGCYHGHSDSLLIKAGSGALTLGVPTSPGVPKDFAKHTLTLEYNNIDQVCEVLSEVGAEVACIIVEPVAGNMNCIPPIDGFLQVLRELCDEYGVILVFDEVMTGFRVALGGAQAFYNVKPDLTTLGKVIGGGLPVGAFGGKREIMQSIAPLGPVYQAGTLSGNPISMSAGLVMLNVLSKDENFYTILNTKVQKLTKGILAKAKENNIGMTANVVGGMFGLFFTDSQSVTNFKETSQCNIELFKKFFHLMLAEGVYMAPSAYEAGFVSSAHSDTDIQNTIDAAGRAFIKLT</sequence>
<comment type="catalytic activity">
    <reaction evidence="1">
        <text>(S)-4-amino-5-oxopentanoate = 5-aminolevulinate</text>
        <dbReference type="Rhea" id="RHEA:14265"/>
        <dbReference type="ChEBI" id="CHEBI:57501"/>
        <dbReference type="ChEBI" id="CHEBI:356416"/>
        <dbReference type="EC" id="5.4.3.8"/>
    </reaction>
</comment>
<comment type="cofactor">
    <cofactor evidence="1">
        <name>pyridoxal 5'-phosphate</name>
        <dbReference type="ChEBI" id="CHEBI:597326"/>
    </cofactor>
</comment>
<comment type="pathway">
    <text evidence="1">Porphyrin-containing compound metabolism; protoporphyrin-IX biosynthesis; 5-aminolevulinate from L-glutamyl-tRNA(Glu): step 2/2.</text>
</comment>
<comment type="subunit">
    <text evidence="1">Homodimer.</text>
</comment>
<comment type="subcellular location">
    <subcellularLocation>
        <location evidence="1">Cytoplasm</location>
    </subcellularLocation>
</comment>
<comment type="similarity">
    <text evidence="1">Belongs to the class-III pyridoxal-phosphate-dependent aminotransferase family. HemL subfamily.</text>
</comment>